<feature type="chain" id="PRO_0000290110" description="Superoxide dismutase [Fe]">
    <location>
        <begin position="1"/>
        <end position="198"/>
    </location>
</feature>
<feature type="binding site">
    <location>
        <position position="27"/>
    </location>
    <ligand>
        <name>Fe cation</name>
        <dbReference type="ChEBI" id="CHEBI:24875"/>
    </ligand>
</feature>
<feature type="binding site">
    <location>
        <position position="74"/>
    </location>
    <ligand>
        <name>Fe cation</name>
        <dbReference type="ChEBI" id="CHEBI:24875"/>
    </ligand>
</feature>
<feature type="binding site">
    <location>
        <position position="158"/>
    </location>
    <ligand>
        <name>Fe cation</name>
        <dbReference type="ChEBI" id="CHEBI:24875"/>
    </ligand>
</feature>
<feature type="binding site">
    <location>
        <position position="162"/>
    </location>
    <ligand>
        <name>Fe cation</name>
        <dbReference type="ChEBI" id="CHEBI:24875"/>
    </ligand>
</feature>
<feature type="turn" evidence="3">
    <location>
        <begin position="12"/>
        <end position="18"/>
    </location>
</feature>
<feature type="helix" evidence="3">
    <location>
        <begin position="21"/>
        <end position="29"/>
    </location>
</feature>
<feature type="helix" evidence="3">
    <location>
        <begin position="31"/>
        <end position="43"/>
    </location>
</feature>
<feature type="turn" evidence="3">
    <location>
        <begin position="47"/>
        <end position="50"/>
    </location>
</feature>
<feature type="helix" evidence="3">
    <location>
        <begin position="53"/>
        <end position="59"/>
    </location>
</feature>
<feature type="helix" evidence="3">
    <location>
        <begin position="62"/>
        <end position="79"/>
    </location>
</feature>
<feature type="helix" evidence="3">
    <location>
        <begin position="92"/>
        <end position="101"/>
    </location>
</feature>
<feature type="helix" evidence="3">
    <location>
        <begin position="104"/>
        <end position="117"/>
    </location>
</feature>
<feature type="strand" evidence="3">
    <location>
        <begin position="120"/>
        <end position="128"/>
    </location>
</feature>
<feature type="strand" evidence="3">
    <location>
        <begin position="134"/>
        <end position="140"/>
    </location>
</feature>
<feature type="turn" evidence="3">
    <location>
        <begin position="145"/>
        <end position="149"/>
    </location>
</feature>
<feature type="strand" evidence="3">
    <location>
        <begin position="152"/>
        <end position="158"/>
    </location>
</feature>
<feature type="helix" evidence="3">
    <location>
        <begin position="161"/>
        <end position="163"/>
    </location>
</feature>
<feature type="helix" evidence="3">
    <location>
        <begin position="165"/>
        <end position="168"/>
    </location>
</feature>
<feature type="helix" evidence="3">
    <location>
        <begin position="172"/>
        <end position="179"/>
    </location>
</feature>
<feature type="turn" evidence="3">
    <location>
        <begin position="180"/>
        <end position="182"/>
    </location>
</feature>
<feature type="helix" evidence="3">
    <location>
        <begin position="185"/>
        <end position="197"/>
    </location>
</feature>
<dbReference type="EC" id="1.15.1.1"/>
<dbReference type="EMBL" id="AL844507">
    <property type="protein sequence ID" value="CAD51224.1"/>
    <property type="molecule type" value="Genomic_DNA"/>
</dbReference>
<dbReference type="RefSeq" id="XP_001349375.1">
    <property type="nucleotide sequence ID" value="XM_001349339.1"/>
</dbReference>
<dbReference type="PDB" id="2BPI">
    <property type="method" value="X-ray"/>
    <property type="resolution" value="2.52 A"/>
    <property type="chains" value="A/B=1-198"/>
</dbReference>
<dbReference type="PDBsum" id="2BPI"/>
<dbReference type="SMR" id="Q8IAY6"/>
<dbReference type="FunCoup" id="Q8IAY6">
    <property type="interactions" value="77"/>
</dbReference>
<dbReference type="IntAct" id="Q8IAY6">
    <property type="interactions" value="1"/>
</dbReference>
<dbReference type="MINT" id="Q8IAY6"/>
<dbReference type="STRING" id="36329.Q8IAY6"/>
<dbReference type="PaxDb" id="5833-PF08_0071"/>
<dbReference type="EnsemblProtists" id="CAD51224">
    <property type="protein sequence ID" value="CAD51224"/>
    <property type="gene ID" value="PF3D7_0814900"/>
</dbReference>
<dbReference type="KEGG" id="pfa:PF3D7_0814900"/>
<dbReference type="VEuPathDB" id="PlasmoDB:PF3D7_0814900"/>
<dbReference type="HOGENOM" id="CLU_031625_0_0_1"/>
<dbReference type="InParanoid" id="Q8IAY6"/>
<dbReference type="OMA" id="DSLINWD"/>
<dbReference type="OrthoDB" id="239262at2759"/>
<dbReference type="PhylomeDB" id="Q8IAY6"/>
<dbReference type="EvolutionaryTrace" id="Q8IAY6"/>
<dbReference type="Proteomes" id="UP000001450">
    <property type="component" value="Chromosome 8"/>
</dbReference>
<dbReference type="GO" id="GO:0005829">
    <property type="term" value="C:cytosol"/>
    <property type="evidence" value="ECO:0000314"/>
    <property type="project" value="GeneDB"/>
</dbReference>
<dbReference type="GO" id="GO:0046872">
    <property type="term" value="F:metal ion binding"/>
    <property type="evidence" value="ECO:0007669"/>
    <property type="project" value="UniProtKB-KW"/>
</dbReference>
<dbReference type="GO" id="GO:0004784">
    <property type="term" value="F:superoxide dismutase activity"/>
    <property type="evidence" value="ECO:0000266"/>
    <property type="project" value="GeneDB"/>
</dbReference>
<dbReference type="GO" id="GO:0006979">
    <property type="term" value="P:response to oxidative stress"/>
    <property type="evidence" value="ECO:0000250"/>
    <property type="project" value="GeneDB"/>
</dbReference>
<dbReference type="GO" id="GO:0006801">
    <property type="term" value="P:superoxide metabolic process"/>
    <property type="evidence" value="ECO:0000250"/>
    <property type="project" value="GeneDB"/>
</dbReference>
<dbReference type="FunFam" id="1.10.287.990:FF:000002">
    <property type="entry name" value="Superoxide dismutase"/>
    <property type="match status" value="1"/>
</dbReference>
<dbReference type="FunFam" id="3.55.40.20:FF:000001">
    <property type="entry name" value="Superoxide dismutase"/>
    <property type="match status" value="1"/>
</dbReference>
<dbReference type="Gene3D" id="1.10.287.990">
    <property type="entry name" value="Fe,Mn superoxide dismutase (SOD) domain"/>
    <property type="match status" value="1"/>
</dbReference>
<dbReference type="Gene3D" id="3.55.40.20">
    <property type="entry name" value="Iron/manganese superoxide dismutase, C-terminal domain"/>
    <property type="match status" value="1"/>
</dbReference>
<dbReference type="InterPro" id="IPR001189">
    <property type="entry name" value="Mn/Fe_SOD"/>
</dbReference>
<dbReference type="InterPro" id="IPR019833">
    <property type="entry name" value="Mn/Fe_SOD_BS"/>
</dbReference>
<dbReference type="InterPro" id="IPR019832">
    <property type="entry name" value="Mn/Fe_SOD_C"/>
</dbReference>
<dbReference type="InterPro" id="IPR019831">
    <property type="entry name" value="Mn/Fe_SOD_N"/>
</dbReference>
<dbReference type="InterPro" id="IPR036324">
    <property type="entry name" value="Mn/Fe_SOD_N_sf"/>
</dbReference>
<dbReference type="InterPro" id="IPR036314">
    <property type="entry name" value="SOD_C_sf"/>
</dbReference>
<dbReference type="PANTHER" id="PTHR42769">
    <property type="entry name" value="SUPEROXIDE DISMUTASE"/>
    <property type="match status" value="1"/>
</dbReference>
<dbReference type="PANTHER" id="PTHR42769:SF3">
    <property type="entry name" value="SUPEROXIDE DISMUTASE [FE] 2, CHLOROPLASTIC"/>
    <property type="match status" value="1"/>
</dbReference>
<dbReference type="Pfam" id="PF02777">
    <property type="entry name" value="Sod_Fe_C"/>
    <property type="match status" value="1"/>
</dbReference>
<dbReference type="Pfam" id="PF00081">
    <property type="entry name" value="Sod_Fe_N"/>
    <property type="match status" value="1"/>
</dbReference>
<dbReference type="PIRSF" id="PIRSF000349">
    <property type="entry name" value="SODismutase"/>
    <property type="match status" value="1"/>
</dbReference>
<dbReference type="PRINTS" id="PR01703">
    <property type="entry name" value="MNSODISMTASE"/>
</dbReference>
<dbReference type="SUPFAM" id="SSF54719">
    <property type="entry name" value="Fe,Mn superoxide dismutase (SOD), C-terminal domain"/>
    <property type="match status" value="1"/>
</dbReference>
<dbReference type="SUPFAM" id="SSF46609">
    <property type="entry name" value="Fe,Mn superoxide dismutase (SOD), N-terminal domain"/>
    <property type="match status" value="1"/>
</dbReference>
<dbReference type="PROSITE" id="PS00088">
    <property type="entry name" value="SOD_MN"/>
    <property type="match status" value="1"/>
</dbReference>
<gene>
    <name type="primary">SODB</name>
    <name type="ORF">PF08_0071</name>
</gene>
<protein>
    <recommendedName>
        <fullName>Superoxide dismutase [Fe]</fullName>
        <ecNumber>1.15.1.1</ecNumber>
    </recommendedName>
    <alternativeName>
        <fullName>FeSOD</fullName>
    </alternativeName>
</protein>
<proteinExistence type="evidence at protein level"/>
<evidence type="ECO:0000269" key="1">
    <source>
    </source>
</evidence>
<evidence type="ECO:0000305" key="2"/>
<evidence type="ECO:0007829" key="3">
    <source>
        <dbReference type="PDB" id="2BPI"/>
    </source>
</evidence>
<organism>
    <name type="scientific">Plasmodium falciparum (isolate 3D7)</name>
    <dbReference type="NCBI Taxonomy" id="36329"/>
    <lineage>
        <taxon>Eukaryota</taxon>
        <taxon>Sar</taxon>
        <taxon>Alveolata</taxon>
        <taxon>Apicomplexa</taxon>
        <taxon>Aconoidasida</taxon>
        <taxon>Haemosporida</taxon>
        <taxon>Plasmodiidae</taxon>
        <taxon>Plasmodium</taxon>
        <taxon>Plasmodium (Laverania)</taxon>
    </lineage>
</organism>
<name>SODF_PLAF7</name>
<comment type="function">
    <text>Destroys superoxide anion radicals which are normally produced within the cells and which are toxic to biological systems.</text>
</comment>
<comment type="catalytic activity">
    <reaction evidence="1">
        <text>2 superoxide + 2 H(+) = H2O2 + O2</text>
        <dbReference type="Rhea" id="RHEA:20696"/>
        <dbReference type="ChEBI" id="CHEBI:15378"/>
        <dbReference type="ChEBI" id="CHEBI:15379"/>
        <dbReference type="ChEBI" id="CHEBI:16240"/>
        <dbReference type="ChEBI" id="CHEBI:18421"/>
        <dbReference type="EC" id="1.15.1.1"/>
    </reaction>
</comment>
<comment type="cofactor">
    <cofactor>
        <name>Fe cation</name>
        <dbReference type="ChEBI" id="CHEBI:24875"/>
    </cofactor>
    <text>Binds 1 Fe cation per subunit.</text>
</comment>
<comment type="subunit">
    <text evidence="1">Homodimer.</text>
</comment>
<comment type="subcellular location">
    <subcellularLocation>
        <location evidence="2">Cytoplasm</location>
    </subcellularLocation>
</comment>
<comment type="similarity">
    <text evidence="2">Belongs to the iron/manganese superoxide dismutase family.</text>
</comment>
<keyword id="KW-0002">3D-structure</keyword>
<keyword id="KW-0963">Cytoplasm</keyword>
<keyword id="KW-0408">Iron</keyword>
<keyword id="KW-0479">Metal-binding</keyword>
<keyword id="KW-0560">Oxidoreductase</keyword>
<keyword id="KW-1185">Reference proteome</keyword>
<reference key="1">
    <citation type="journal article" date="2002" name="Nature">
        <title>Genome sequence of the human malaria parasite Plasmodium falciparum.</title>
        <authorList>
            <person name="Gardner M.J."/>
            <person name="Hall N."/>
            <person name="Fung E."/>
            <person name="White O."/>
            <person name="Berriman M."/>
            <person name="Hyman R.W."/>
            <person name="Carlton J.M."/>
            <person name="Pain A."/>
            <person name="Nelson K.E."/>
            <person name="Bowman S."/>
            <person name="Paulsen I.T."/>
            <person name="James K.D."/>
            <person name="Eisen J.A."/>
            <person name="Rutherford K.M."/>
            <person name="Salzberg S.L."/>
            <person name="Craig A."/>
            <person name="Kyes S."/>
            <person name="Chan M.-S."/>
            <person name="Nene V."/>
            <person name="Shallom S.J."/>
            <person name="Suh B."/>
            <person name="Peterson J."/>
            <person name="Angiuoli S."/>
            <person name="Pertea M."/>
            <person name="Allen J."/>
            <person name="Selengut J."/>
            <person name="Haft D."/>
            <person name="Mather M.W."/>
            <person name="Vaidya A.B."/>
            <person name="Martin D.M.A."/>
            <person name="Fairlamb A.H."/>
            <person name="Fraunholz M.J."/>
            <person name="Roos D.S."/>
            <person name="Ralph S.A."/>
            <person name="McFadden G.I."/>
            <person name="Cummings L.M."/>
            <person name="Subramanian G.M."/>
            <person name="Mungall C."/>
            <person name="Venter J.C."/>
            <person name="Carucci D.J."/>
            <person name="Hoffman S.L."/>
            <person name="Newbold C."/>
            <person name="Davis R.W."/>
            <person name="Fraser C.M."/>
            <person name="Barrell B.G."/>
        </authorList>
    </citation>
    <scope>NUCLEOTIDE SEQUENCE [LARGE SCALE GENOMIC DNA]</scope>
    <source>
        <strain>3D7</strain>
    </source>
</reference>
<reference key="2">
    <citation type="journal article" date="2002" name="Nature">
        <title>Sequence of Plasmodium falciparum chromosomes 1, 3-9 and 13.</title>
        <authorList>
            <person name="Hall N."/>
            <person name="Pain A."/>
            <person name="Berriman M."/>
            <person name="Churcher C.M."/>
            <person name="Harris B."/>
            <person name="Harris D."/>
            <person name="Mungall K.L."/>
            <person name="Bowman S."/>
            <person name="Atkin R."/>
            <person name="Baker S."/>
            <person name="Barron A."/>
            <person name="Brooks K."/>
            <person name="Buckee C.O."/>
            <person name="Burrows C."/>
            <person name="Cherevach I."/>
            <person name="Chillingworth C."/>
            <person name="Chillingworth T."/>
            <person name="Christodoulou Z."/>
            <person name="Clark L."/>
            <person name="Clark R."/>
            <person name="Corton C."/>
            <person name="Cronin A."/>
            <person name="Davies R.M."/>
            <person name="Davis P."/>
            <person name="Dear P."/>
            <person name="Dearden F."/>
            <person name="Doggett J."/>
            <person name="Feltwell T."/>
            <person name="Goble A."/>
            <person name="Goodhead I."/>
            <person name="Gwilliam R."/>
            <person name="Hamlin N."/>
            <person name="Hance Z."/>
            <person name="Harper D."/>
            <person name="Hauser H."/>
            <person name="Hornsby T."/>
            <person name="Holroyd S."/>
            <person name="Horrocks P."/>
            <person name="Humphray S."/>
            <person name="Jagels K."/>
            <person name="James K.D."/>
            <person name="Johnson D."/>
            <person name="Kerhornou A."/>
            <person name="Knights A."/>
            <person name="Konfortov B."/>
            <person name="Kyes S."/>
            <person name="Larke N."/>
            <person name="Lawson D."/>
            <person name="Lennard N."/>
            <person name="Line A."/>
            <person name="Maddison M."/>
            <person name="Mclean J."/>
            <person name="Mooney P."/>
            <person name="Moule S."/>
            <person name="Murphy L."/>
            <person name="Oliver K."/>
            <person name="Ormond D."/>
            <person name="Price C."/>
            <person name="Quail M.A."/>
            <person name="Rabbinowitsch E."/>
            <person name="Rajandream M.A."/>
            <person name="Rutter S."/>
            <person name="Rutherford K.M."/>
            <person name="Sanders M."/>
            <person name="Simmonds M."/>
            <person name="Seeger K."/>
            <person name="Sharp S."/>
            <person name="Smith R."/>
            <person name="Squares R."/>
            <person name="Squares S."/>
            <person name="Stevens K."/>
            <person name="Taylor K."/>
            <person name="Tivey A."/>
            <person name="Unwin L."/>
            <person name="Whitehead S."/>
            <person name="Woodward J.R."/>
            <person name="Sulston J.E."/>
            <person name="Craig A."/>
            <person name="Newbold C."/>
            <person name="Barrell B.G."/>
        </authorList>
    </citation>
    <scope>NUCLEOTIDE SEQUENCE [LARGE SCALE GENOMIC DNA]</scope>
    <source>
        <strain>3D7</strain>
    </source>
</reference>
<reference key="3">
    <citation type="journal article" date="2006" name="BMC Struct. Biol.">
        <title>The crystal structure of superoxide dismutase from Plasmodium falciparum.</title>
        <authorList>
            <person name="Boucher I.W."/>
            <person name="Brzozowski A.M."/>
            <person name="Brannigan J.A."/>
            <person name="Schnick C."/>
            <person name="Smith D.J."/>
            <person name="Kyes S.A."/>
            <person name="Wilkinson A.J."/>
        </authorList>
    </citation>
    <scope>X-RAY CRYSTALLOGRAPHY (2.52 ANGSTROMS) IN COMPLEX WITH IRON IONS</scope>
    <scope>CATALYTIC ACTIVITY</scope>
    <scope>SUBUNIT</scope>
</reference>
<sequence>MVITLPKLKYALNALSPHISEETLNFHYNKHHAGYVNKLNTLIKDTPFAEKSLLDIVKESSGAIFNNAAQIWNHTFYWDSMGPDCGGEPHGEIKEKIQEDFGSFNNFKEQFSNILCGHFGSGWGWLALNNNNKLVILQTHDAGNPIKDNTGIPILTCDIWEHAYYIDYRNDRASYVKAWWNLVNWNFANENLKKAMQK</sequence>
<accession>Q8IAY6</accession>